<proteinExistence type="evidence at protein level"/>
<comment type="function">
    <text evidence="3 5 6">Involved in the biosynthesis of germacrene C, one of the most abundant sesquiterpene in the leaf oil of tomato (PubMed:11090225). Produces mainly germacrene C, but also smaller amounts of germacrene A, B and D when used with farnesyl diphosphate (FPP) as substrate; able to use both (2E,6E)-farnesyl diphosphate ((EE)-FPP) and (2Z,6Z)-farnesyl diphosphate ((ZZ)-FPP) (PubMed:21818683, PubMed:9482865). No or low activity with geranylgeranyl diphosphate (GGPP) (PubMed:9482865). Can act with a low efficiency as a monoterpene synthase with geranyl diphosphate (GPP) as substrate, thus producing beta-myrcene, limonene and terpinolene (PubMed:21818683, PubMed:9482865).</text>
</comment>
<comment type="catalytic activity">
    <reaction evidence="5 6">
        <text>(2E,6E)-farnesyl diphosphate = germacrene C + diphosphate</text>
        <dbReference type="Rhea" id="RHEA:28302"/>
        <dbReference type="ChEBI" id="CHEBI:33019"/>
        <dbReference type="ChEBI" id="CHEBI:61478"/>
        <dbReference type="ChEBI" id="CHEBI:175763"/>
        <dbReference type="EC" id="4.2.3.60"/>
    </reaction>
    <physiologicalReaction direction="left-to-right" evidence="5 6">
        <dbReference type="Rhea" id="RHEA:28303"/>
    </physiologicalReaction>
</comment>
<comment type="catalytic activity">
    <reaction evidence="5">
        <text>(2E)-geranyl diphosphate = terpinolene + diphosphate</text>
        <dbReference type="Rhea" id="RHEA:25500"/>
        <dbReference type="ChEBI" id="CHEBI:9457"/>
        <dbReference type="ChEBI" id="CHEBI:33019"/>
        <dbReference type="ChEBI" id="CHEBI:58057"/>
        <dbReference type="EC" id="4.2.3.113"/>
    </reaction>
    <physiologicalReaction direction="left-to-right" evidence="5">
        <dbReference type="Rhea" id="RHEA:25501"/>
    </physiologicalReaction>
</comment>
<comment type="catalytic activity">
    <reaction evidence="5">
        <text>(2E)-geranyl diphosphate = limonene + diphosphate</text>
        <dbReference type="Rhea" id="RHEA:68640"/>
        <dbReference type="ChEBI" id="CHEBI:15384"/>
        <dbReference type="ChEBI" id="CHEBI:33019"/>
        <dbReference type="ChEBI" id="CHEBI:58057"/>
    </reaction>
    <physiologicalReaction direction="left-to-right" evidence="5">
        <dbReference type="Rhea" id="RHEA:68641"/>
    </physiologicalReaction>
</comment>
<comment type="catalytic activity">
    <reaction evidence="5">
        <text>(2E)-geranyl diphosphate = beta-myrcene + diphosphate</text>
        <dbReference type="Rhea" id="RHEA:16965"/>
        <dbReference type="ChEBI" id="CHEBI:17221"/>
        <dbReference type="ChEBI" id="CHEBI:33019"/>
        <dbReference type="ChEBI" id="CHEBI:58057"/>
        <dbReference type="EC" id="4.2.3.15"/>
    </reaction>
    <physiologicalReaction direction="left-to-right" evidence="5">
        <dbReference type="Rhea" id="RHEA:16966"/>
    </physiologicalReaction>
</comment>
<comment type="catalytic activity">
    <reaction evidence="5">
        <text>(2Z,6Z)-farnesyl diphosphate = germacrene C + diphosphate</text>
        <dbReference type="Rhea" id="RHEA:68772"/>
        <dbReference type="ChEBI" id="CHEBI:33019"/>
        <dbReference type="ChEBI" id="CHEBI:60374"/>
        <dbReference type="ChEBI" id="CHEBI:61478"/>
    </reaction>
    <physiologicalReaction direction="left-to-right" evidence="5">
        <dbReference type="Rhea" id="RHEA:68773"/>
    </physiologicalReaction>
</comment>
<comment type="cofactor">
    <cofactor evidence="12">
        <name>Mg(2+)</name>
        <dbReference type="ChEBI" id="CHEBI:18420"/>
    </cofactor>
    <cofactor evidence="12">
        <name>Mn(2+)</name>
        <dbReference type="ChEBI" id="CHEBI:29035"/>
    </cofactor>
    <text evidence="12">Binds 3 Mg(2+) or Mn(2+) ions per subunit.</text>
</comment>
<comment type="pathway">
    <text evidence="5 6">Secondary metabolite biosynthesis; terpenoid biosynthesis.</text>
</comment>
<comment type="subcellular location">
    <subcellularLocation>
        <location evidence="11">Cytoplasm</location>
    </subcellularLocation>
</comment>
<comment type="tissue specificity">
    <text evidence="4 5">Mostly expressed in stem and trichomes, to a lower extent in roots, leaves and flowers and, at low levels, in fruits.</text>
</comment>
<comment type="domain">
    <text evidence="1">The Asp-Asp-Xaa-Xaa-Asp/Glu (DDXXD/E) motif is important for the catalytic activity, presumably through binding to Mg(2+).</text>
</comment>
<comment type="similarity">
    <text evidence="11">Belongs to the terpene synthase family. Tpsa subfamily.</text>
</comment>
<comment type="caution">
    <text evidence="11">It is unclear whether AAC39431 and AAC39432 represent different alleles or different products derived from two germacrene C synthase loci.</text>
</comment>
<keyword id="KW-0963">Cytoplasm</keyword>
<keyword id="KW-0456">Lyase</keyword>
<keyword id="KW-0460">Magnesium</keyword>
<keyword id="KW-0464">Manganese</keyword>
<keyword id="KW-0479">Metal-binding</keyword>
<keyword id="KW-1185">Reference proteome</keyword>
<protein>
    <recommendedName>
        <fullName evidence="8 9">Sesquiterpene synthase 9</fullName>
        <shortName evidence="8 9">SlTPS9</shortName>
        <shortName evidence="8">Terpene synthase 9</shortName>
    </recommendedName>
    <alternativeName>
        <fullName evidence="9">Beta-myrcene synthase TPS9</fullName>
        <ecNumber evidence="5">4.2.3.15</ecNumber>
    </alternativeName>
    <alternativeName>
        <fullName evidence="9 10">Germacrene C synthase TPS9</fullName>
        <ecNumber evidence="5 6">4.2.3.60</ecNumber>
    </alternativeName>
    <alternativeName>
        <fullName evidence="9">Limonene synthase TPS9</fullName>
        <ecNumber evidence="5">4.2.3.-</ecNumber>
    </alternativeName>
    <alternativeName>
        <fullName evidence="7">Sesquiterpene synthase 1</fullName>
    </alternativeName>
    <alternativeName>
        <fullName evidence="9">Terpinolene synthase TPS9</fullName>
        <ecNumber evidence="5">4.2.3.113</ecNumber>
    </alternativeName>
</protein>
<reference key="1">
    <citation type="journal article" date="1998" name="Proc. Natl. Acad. Sci. U.S.A.">
        <title>Germacrene C synthase from Lycopersicon esculentum cv. VFNT cherry tomato: cDNA isolation, characterization, and bacterial expression of the multiple product sesquiterpene cyclase.</title>
        <authorList>
            <person name="Colby S.M."/>
            <person name="Crock J."/>
            <person name="Dowdle-Rizzo B."/>
            <person name="Lemaux P.G."/>
            <person name="Croteau R."/>
        </authorList>
    </citation>
    <scope>NUCLEOTIDE SEQUENCE [MRNA]</scope>
    <scope>FUNCTION</scope>
    <scope>CATALYTIC ACTIVITY</scope>
    <scope>COFACTOR</scope>
    <scope>PATHWAY</scope>
    <source>
        <strain>cv. VFNT Cherry</strain>
        <tissue>Epidermis</tissue>
    </source>
</reference>
<reference key="2">
    <citation type="journal article" date="2000" name="Plant Cell">
        <title>Genetic Control and Evolution of Sesquiterpene Biosynthesis in Lycopersicon esculentum and Lycopersicon hirsutum.</title>
        <authorList>
            <person name="van Der Hoeven R.S."/>
            <person name="Monforte A.J."/>
            <person name="Breeden D."/>
            <person name="Tanksley S.D."/>
            <person name="Steffens J.C."/>
        </authorList>
    </citation>
    <scope>NUCLEOTIDE SEQUENCE [MRNA]</scope>
    <scope>FUNCTION</scope>
    <source>
        <strain>cv. E6203</strain>
    </source>
</reference>
<reference key="3">
    <citation type="journal article" date="2011" name="Plant Physiol.">
        <title>The tomato terpene synthase gene family.</title>
        <authorList>
            <person name="Falara V."/>
            <person name="Akhtar T.A."/>
            <person name="Nguyen T.T.H."/>
            <person name="Spyropoulou E.A."/>
            <person name="Bleeker P.M."/>
            <person name="Schauvinhold I."/>
            <person name="Matsuba Y."/>
            <person name="Bonini M.E."/>
            <person name="Schilmiller A.L."/>
            <person name="Last R.L."/>
            <person name="Schuurink R.C."/>
            <person name="Pichersky E."/>
        </authorList>
    </citation>
    <scope>NUCLEOTIDE SEQUENCE [GENOMIC DNA]</scope>
    <scope>TISSUE SPECIFICITY</scope>
    <scope>GENE FAMILY</scope>
    <source>
        <strain>cv. M82</strain>
    </source>
</reference>
<reference key="4">
    <citation type="journal article" date="2011" name="Plant Mol. Biol.">
        <title>RNA-seq discovery, functional characterization, and comparison of sesquiterpene synthases from Solanum lycopersicum and Solanum habrochaites trichomes.</title>
        <authorList>
            <person name="Bleeker P.M."/>
            <person name="Spyropoulou E.A."/>
            <person name="Diergaarde P.J."/>
            <person name="Volpin H."/>
            <person name="De Both M.T.J."/>
            <person name="Zerbe P."/>
            <person name="Bohlmann J."/>
            <person name="Falara V."/>
            <person name="Matsuba Y."/>
            <person name="Pichersky E."/>
            <person name="Haring M.A."/>
            <person name="Schuurink R.C."/>
        </authorList>
    </citation>
    <scope>FUNCTION</scope>
    <scope>CATALYTIC ACTIVITY</scope>
    <scope>PATHWAY</scope>
    <scope>TISSUE SPECIFICITY</scope>
    <scope>GENE FAMILY</scope>
    <source>
        <strain>cv. Moneymaker</strain>
    </source>
</reference>
<evidence type="ECO:0000250" key="1">
    <source>
        <dbReference type="UniProtKB" id="A0A1C9J6A7"/>
    </source>
</evidence>
<evidence type="ECO:0000250" key="2">
    <source>
        <dbReference type="UniProtKB" id="Q40577"/>
    </source>
</evidence>
<evidence type="ECO:0000269" key="3">
    <source>
    </source>
</evidence>
<evidence type="ECO:0000269" key="4">
    <source>
    </source>
</evidence>
<evidence type="ECO:0000269" key="5">
    <source>
    </source>
</evidence>
<evidence type="ECO:0000269" key="6">
    <source>
    </source>
</evidence>
<evidence type="ECO:0000303" key="7">
    <source>
    </source>
</evidence>
<evidence type="ECO:0000303" key="8">
    <source>
    </source>
</evidence>
<evidence type="ECO:0000303" key="9">
    <source>
    </source>
</evidence>
<evidence type="ECO:0000303" key="10">
    <source>
    </source>
</evidence>
<evidence type="ECO:0000305" key="11"/>
<evidence type="ECO:0000305" key="12">
    <source>
    </source>
</evidence>
<name>TPS9_SOLLC</name>
<sequence length="548" mass="64115">MAASSADKCRPLANFHPSVWGYHFLSYTHEITNQEKVEVDEYKETIRKMLVETCDNSTQKLVLIDAMQRLGVAYHFDNEIETSIQNIFDASSKQNDNDNNLYVVSLRFRLVRQQGHYMSSDVFKQFTNQDGKFKETLTNDVQGLLSLYEASHLRVRNEEILEEALTFTTTHLESIVSNLSNNNNSLKVEVGEALTQPIRMTLPRMGARKYISIYENNDAHHHLLLKFAKLDFNMLQKFHQRELSDLTRWWKDLDFANKYPYARDRLVECYFWILGVYFEPKYSRARKMMTKVLNLTSIIDDTFDAYATFDELVTFNDAIQRWDANAIDSIQPYMRPAYQALLDIYSEMEQVLSKEGKLDRVYYAKNEMKKLVRAYFKETQWLNDCDHIPKYEEQVENAIVSAGYMMISTTCLVGIEEFISHETFEWLMNESVIVRASALIARAMNDIVGHEDEQERGHVASLIECYMKDYGASKQETYIKFLKEVTNAWKDINKQFFRPTEVPMFVLERVLNLTRVADTLYKEKDTYTNAKGKLKNMINSILIESVKI</sequence>
<feature type="chain" id="PRO_0000412239" description="Sesquiterpene synthase 9">
    <location>
        <begin position="1"/>
        <end position="548"/>
    </location>
</feature>
<feature type="short sequence motif" description="DDXXD motif" evidence="1">
    <location>
        <begin position="300"/>
        <end position="304"/>
    </location>
</feature>
<feature type="binding site" evidence="2">
    <location>
        <position position="300"/>
    </location>
    <ligand>
        <name>Mg(2+)</name>
        <dbReference type="ChEBI" id="CHEBI:18420"/>
        <label>1</label>
    </ligand>
</feature>
<feature type="binding site" evidence="2">
    <location>
        <position position="300"/>
    </location>
    <ligand>
        <name>Mg(2+)</name>
        <dbReference type="ChEBI" id="CHEBI:18420"/>
        <label>2</label>
    </ligand>
</feature>
<feature type="binding site" evidence="2">
    <location>
        <position position="304"/>
    </location>
    <ligand>
        <name>Mg(2+)</name>
        <dbReference type="ChEBI" id="CHEBI:18420"/>
        <label>1</label>
    </ligand>
</feature>
<feature type="binding site" evidence="2">
    <location>
        <position position="304"/>
    </location>
    <ligand>
        <name>Mg(2+)</name>
        <dbReference type="ChEBI" id="CHEBI:18420"/>
        <label>2</label>
    </ligand>
</feature>
<feature type="binding site" evidence="2">
    <location>
        <position position="453"/>
    </location>
    <ligand>
        <name>Mg(2+)</name>
        <dbReference type="ChEBI" id="CHEBI:18420"/>
        <label>3</label>
    </ligand>
</feature>
<feature type="sequence conflict" description="In Ref. 1; AAC39432." evidence="11" ref="1">
    <original>F</original>
    <variation>S</variation>
    <location>
        <position position="497"/>
    </location>
</feature>
<feature type="sequence conflict" description="In Ref. 1; AAC39432." evidence="11" ref="1">
    <original>TN</original>
    <variation>ST</variation>
    <location>
        <begin position="528"/>
        <end position="529"/>
    </location>
</feature>
<feature type="sequence conflict" description="In Ref. 1; AAC39432." evidence="11" ref="1">
    <original>S</original>
    <variation>P</variation>
    <location>
        <position position="540"/>
    </location>
</feature>
<dbReference type="EC" id="4.2.3.15" evidence="5"/>
<dbReference type="EC" id="4.2.3.60" evidence="5 6"/>
<dbReference type="EC" id="4.2.3.-" evidence="5"/>
<dbReference type="EC" id="4.2.3.113" evidence="5"/>
<dbReference type="EMBL" id="AF035630">
    <property type="protein sequence ID" value="AAC39431.1"/>
    <property type="molecule type" value="mRNA"/>
</dbReference>
<dbReference type="EMBL" id="AF035631">
    <property type="protein sequence ID" value="AAC39432.1"/>
    <property type="molecule type" value="mRNA"/>
</dbReference>
<dbReference type="EMBL" id="AF279453">
    <property type="protein sequence ID" value="AAG41889.1"/>
    <property type="molecule type" value="mRNA"/>
</dbReference>
<dbReference type="EMBL" id="JN408289">
    <property type="protein sequence ID" value="AEM05858.1"/>
    <property type="molecule type" value="Genomic_DNA"/>
</dbReference>
<dbReference type="PIR" id="T06265">
    <property type="entry name" value="T06265"/>
</dbReference>
<dbReference type="PIR" id="T06266">
    <property type="entry name" value="T06266"/>
</dbReference>
<dbReference type="RefSeq" id="NP_001234055.1">
    <property type="nucleotide sequence ID" value="NM_001247126.2"/>
</dbReference>
<dbReference type="SMR" id="O64961"/>
<dbReference type="FunCoup" id="O64961">
    <property type="interactions" value="20"/>
</dbReference>
<dbReference type="STRING" id="4081.O64961"/>
<dbReference type="EnsemblPlants" id="Solyc06g059885.1.1">
    <property type="protein sequence ID" value="Solyc06g059885.1.1"/>
    <property type="gene ID" value="Solyc06g059885.1"/>
</dbReference>
<dbReference type="GeneID" id="543549"/>
<dbReference type="Gramene" id="Solyc06g059885.1.1">
    <property type="protein sequence ID" value="Solyc06g059885.1.1"/>
    <property type="gene ID" value="Solyc06g059885.1"/>
</dbReference>
<dbReference type="KEGG" id="sly:543549"/>
<dbReference type="InParanoid" id="O64961"/>
<dbReference type="OMA" id="YYSYARI"/>
<dbReference type="OrthoDB" id="1877784at2759"/>
<dbReference type="BioCyc" id="MetaCyc:MONOMER-13579"/>
<dbReference type="UniPathway" id="UPA00213"/>
<dbReference type="Proteomes" id="UP000004994">
    <property type="component" value="Chromosome 6"/>
</dbReference>
<dbReference type="ExpressionAtlas" id="O64961">
    <property type="expression patterns" value="baseline and differential"/>
</dbReference>
<dbReference type="GO" id="GO:0005737">
    <property type="term" value="C:cytoplasm"/>
    <property type="evidence" value="ECO:0007669"/>
    <property type="project" value="UniProtKB-SubCell"/>
</dbReference>
<dbReference type="GO" id="GO:0102904">
    <property type="term" value="F:germacrene C synthase activity"/>
    <property type="evidence" value="ECO:0007669"/>
    <property type="project" value="UniProtKB-EC"/>
</dbReference>
<dbReference type="GO" id="GO:0000287">
    <property type="term" value="F:magnesium ion binding"/>
    <property type="evidence" value="ECO:0007669"/>
    <property type="project" value="InterPro"/>
</dbReference>
<dbReference type="GO" id="GO:0050551">
    <property type="term" value="F:myrcene synthase activity"/>
    <property type="evidence" value="ECO:0007669"/>
    <property type="project" value="RHEA"/>
</dbReference>
<dbReference type="GO" id="GO:0010333">
    <property type="term" value="F:terpene synthase activity"/>
    <property type="evidence" value="ECO:0000314"/>
    <property type="project" value="UniProtKB"/>
</dbReference>
<dbReference type="GO" id="GO:0016102">
    <property type="term" value="P:diterpenoid biosynthetic process"/>
    <property type="evidence" value="ECO:0007669"/>
    <property type="project" value="InterPro"/>
</dbReference>
<dbReference type="GO" id="GO:0016114">
    <property type="term" value="P:terpenoid biosynthetic process"/>
    <property type="evidence" value="ECO:0000314"/>
    <property type="project" value="UniProtKB"/>
</dbReference>
<dbReference type="CDD" id="cd00684">
    <property type="entry name" value="Terpene_cyclase_plant_C1"/>
    <property type="match status" value="1"/>
</dbReference>
<dbReference type="FunFam" id="1.10.600.10:FF:000007">
    <property type="entry name" value="Isoprene synthase, chloroplastic"/>
    <property type="match status" value="1"/>
</dbReference>
<dbReference type="FunFam" id="1.50.10.130:FF:000001">
    <property type="entry name" value="Isoprene synthase, chloroplastic"/>
    <property type="match status" value="1"/>
</dbReference>
<dbReference type="Gene3D" id="1.10.600.10">
    <property type="entry name" value="Farnesyl Diphosphate Synthase"/>
    <property type="match status" value="1"/>
</dbReference>
<dbReference type="Gene3D" id="1.50.10.130">
    <property type="entry name" value="Terpene synthase, N-terminal domain"/>
    <property type="match status" value="1"/>
</dbReference>
<dbReference type="InterPro" id="IPR008949">
    <property type="entry name" value="Isoprenoid_synthase_dom_sf"/>
</dbReference>
<dbReference type="InterPro" id="IPR034741">
    <property type="entry name" value="Terpene_cyclase-like_1_C"/>
</dbReference>
<dbReference type="InterPro" id="IPR044814">
    <property type="entry name" value="Terpene_cyclase_plant_C1"/>
</dbReference>
<dbReference type="InterPro" id="IPR001906">
    <property type="entry name" value="Terpene_synth_N"/>
</dbReference>
<dbReference type="InterPro" id="IPR036965">
    <property type="entry name" value="Terpene_synth_N_sf"/>
</dbReference>
<dbReference type="InterPro" id="IPR050148">
    <property type="entry name" value="Terpene_synthase-like"/>
</dbReference>
<dbReference type="InterPro" id="IPR005630">
    <property type="entry name" value="Terpene_synthase_metal-bd"/>
</dbReference>
<dbReference type="InterPro" id="IPR008930">
    <property type="entry name" value="Terpenoid_cyclase/PrenylTrfase"/>
</dbReference>
<dbReference type="PANTHER" id="PTHR31225">
    <property type="entry name" value="OS04G0344100 PROTEIN-RELATED"/>
    <property type="match status" value="1"/>
</dbReference>
<dbReference type="PANTHER" id="PTHR31225:SF246">
    <property type="entry name" value="SESQUITERPENE SYNTHASE 9"/>
    <property type="match status" value="1"/>
</dbReference>
<dbReference type="Pfam" id="PF01397">
    <property type="entry name" value="Terpene_synth"/>
    <property type="match status" value="1"/>
</dbReference>
<dbReference type="Pfam" id="PF03936">
    <property type="entry name" value="Terpene_synth_C"/>
    <property type="match status" value="1"/>
</dbReference>
<dbReference type="SFLD" id="SFLDS00005">
    <property type="entry name" value="Isoprenoid_Synthase_Type_I"/>
    <property type="match status" value="1"/>
</dbReference>
<dbReference type="SFLD" id="SFLDG01019">
    <property type="entry name" value="Terpene_Cyclase_Like_1_C_Termi"/>
    <property type="match status" value="1"/>
</dbReference>
<dbReference type="SUPFAM" id="SSF48239">
    <property type="entry name" value="Terpenoid cyclases/Protein prenyltransferases"/>
    <property type="match status" value="1"/>
</dbReference>
<dbReference type="SUPFAM" id="SSF48576">
    <property type="entry name" value="Terpenoid synthases"/>
    <property type="match status" value="1"/>
</dbReference>
<organism>
    <name type="scientific">Solanum lycopersicum</name>
    <name type="common">Tomato</name>
    <name type="synonym">Lycopersicon esculentum</name>
    <dbReference type="NCBI Taxonomy" id="4081"/>
    <lineage>
        <taxon>Eukaryota</taxon>
        <taxon>Viridiplantae</taxon>
        <taxon>Streptophyta</taxon>
        <taxon>Embryophyta</taxon>
        <taxon>Tracheophyta</taxon>
        <taxon>Spermatophyta</taxon>
        <taxon>Magnoliopsida</taxon>
        <taxon>eudicotyledons</taxon>
        <taxon>Gunneridae</taxon>
        <taxon>Pentapetalae</taxon>
        <taxon>asterids</taxon>
        <taxon>lamiids</taxon>
        <taxon>Solanales</taxon>
        <taxon>Solanaceae</taxon>
        <taxon>Solanoideae</taxon>
        <taxon>Solaneae</taxon>
        <taxon>Solanum</taxon>
        <taxon>Solanum subgen. Lycopersicon</taxon>
    </lineage>
</organism>
<gene>
    <name evidence="8 9" type="primary">TPS9</name>
    <name evidence="7" type="synonym">SSTLE1</name>
</gene>
<accession>O64961</accession>
<accession>G1JUH6</accession>
<accession>O64962</accession>